<sequence length="454" mass="49156">MSNTDTIVAQATPPGRGGVGILRVSGQAAAEVAHAVLGKLPKPRHADYLPFRDTNGTTLDQGIALWFPGPNSFTGEDVLELQGHGGPVILDLLLQRILTLPNVRIARPGEFSERAFLNDKLDLAQAEAIADLIDASSEQAARSALNSLQGVFSTRINQLVEALTHLRIYVEAAIDFPDEEIDFLSDGKIEAQLNGVMADLDAVRTEAHQGSLLREGMKVVIAGRPNAGKSSLLNALAGREAAIVTAIAGTTRDVLREHIHIDGMPLHIIDTAGLRDASDEVERIGIERAWQEIEQADRVLFMVDGTTTQATEPEQIWPEFMARLPKTLPITVVRNKADVTGETLGIADVNTHSLIRLSARTGEGVDTLRDHLKQSMGFTSNTEGGFLARRRHLQALELAAQHLIQGKEQLVSAYAGELLAEELRLAQQSLSEITGEFTSDDLLGRIFSSFCIGK</sequence>
<gene>
    <name evidence="1" type="primary">mnmE</name>
    <name evidence="1" type="synonym">trmE</name>
    <name type="ordered locus">ECA4446</name>
</gene>
<dbReference type="EC" id="3.6.-.-" evidence="1"/>
<dbReference type="EMBL" id="BX950851">
    <property type="protein sequence ID" value="CAG77342.1"/>
    <property type="molecule type" value="Genomic_DNA"/>
</dbReference>
<dbReference type="RefSeq" id="WP_011095904.1">
    <property type="nucleotide sequence ID" value="NC_004547.2"/>
</dbReference>
<dbReference type="SMR" id="Q6CYQ9"/>
<dbReference type="STRING" id="218491.ECA4446"/>
<dbReference type="GeneID" id="57211137"/>
<dbReference type="KEGG" id="eca:ECA4446"/>
<dbReference type="PATRIC" id="fig|218491.5.peg.4535"/>
<dbReference type="eggNOG" id="COG0486">
    <property type="taxonomic scope" value="Bacteria"/>
</dbReference>
<dbReference type="HOGENOM" id="CLU_019624_4_1_6"/>
<dbReference type="OrthoDB" id="9805918at2"/>
<dbReference type="Proteomes" id="UP000007966">
    <property type="component" value="Chromosome"/>
</dbReference>
<dbReference type="GO" id="GO:0005829">
    <property type="term" value="C:cytosol"/>
    <property type="evidence" value="ECO:0007669"/>
    <property type="project" value="TreeGrafter"/>
</dbReference>
<dbReference type="GO" id="GO:0005525">
    <property type="term" value="F:GTP binding"/>
    <property type="evidence" value="ECO:0007669"/>
    <property type="project" value="UniProtKB-UniRule"/>
</dbReference>
<dbReference type="GO" id="GO:0003924">
    <property type="term" value="F:GTPase activity"/>
    <property type="evidence" value="ECO:0007669"/>
    <property type="project" value="UniProtKB-UniRule"/>
</dbReference>
<dbReference type="GO" id="GO:0046872">
    <property type="term" value="F:metal ion binding"/>
    <property type="evidence" value="ECO:0007669"/>
    <property type="project" value="UniProtKB-KW"/>
</dbReference>
<dbReference type="GO" id="GO:0030488">
    <property type="term" value="P:tRNA methylation"/>
    <property type="evidence" value="ECO:0007669"/>
    <property type="project" value="TreeGrafter"/>
</dbReference>
<dbReference type="GO" id="GO:0002098">
    <property type="term" value="P:tRNA wobble uridine modification"/>
    <property type="evidence" value="ECO:0007669"/>
    <property type="project" value="TreeGrafter"/>
</dbReference>
<dbReference type="CDD" id="cd04164">
    <property type="entry name" value="trmE"/>
    <property type="match status" value="1"/>
</dbReference>
<dbReference type="CDD" id="cd14858">
    <property type="entry name" value="TrmE_N"/>
    <property type="match status" value="1"/>
</dbReference>
<dbReference type="FunFam" id="3.30.1360.120:FF:000001">
    <property type="entry name" value="tRNA modification GTPase MnmE"/>
    <property type="match status" value="1"/>
</dbReference>
<dbReference type="FunFam" id="3.40.50.300:FF:000249">
    <property type="entry name" value="tRNA modification GTPase MnmE"/>
    <property type="match status" value="1"/>
</dbReference>
<dbReference type="Gene3D" id="3.40.50.300">
    <property type="entry name" value="P-loop containing nucleotide triphosphate hydrolases"/>
    <property type="match status" value="1"/>
</dbReference>
<dbReference type="Gene3D" id="3.30.1360.120">
    <property type="entry name" value="Probable tRNA modification gtpase trme, domain 1"/>
    <property type="match status" value="1"/>
</dbReference>
<dbReference type="Gene3D" id="1.20.120.430">
    <property type="entry name" value="tRNA modification GTPase MnmE domain 2"/>
    <property type="match status" value="1"/>
</dbReference>
<dbReference type="HAMAP" id="MF_00379">
    <property type="entry name" value="GTPase_MnmE"/>
    <property type="match status" value="1"/>
</dbReference>
<dbReference type="InterPro" id="IPR031168">
    <property type="entry name" value="G_TrmE"/>
</dbReference>
<dbReference type="InterPro" id="IPR006073">
    <property type="entry name" value="GTP-bd"/>
</dbReference>
<dbReference type="InterPro" id="IPR018948">
    <property type="entry name" value="GTP-bd_TrmE_N"/>
</dbReference>
<dbReference type="InterPro" id="IPR004520">
    <property type="entry name" value="GTPase_MnmE"/>
</dbReference>
<dbReference type="InterPro" id="IPR027368">
    <property type="entry name" value="MnmE_dom2"/>
</dbReference>
<dbReference type="InterPro" id="IPR025867">
    <property type="entry name" value="MnmE_helical"/>
</dbReference>
<dbReference type="InterPro" id="IPR027417">
    <property type="entry name" value="P-loop_NTPase"/>
</dbReference>
<dbReference type="InterPro" id="IPR005225">
    <property type="entry name" value="Small_GTP-bd"/>
</dbReference>
<dbReference type="InterPro" id="IPR027266">
    <property type="entry name" value="TrmE/GcvT_dom1"/>
</dbReference>
<dbReference type="NCBIfam" id="TIGR00450">
    <property type="entry name" value="mnmE_trmE_thdF"/>
    <property type="match status" value="1"/>
</dbReference>
<dbReference type="NCBIfam" id="NF003661">
    <property type="entry name" value="PRK05291.1-3"/>
    <property type="match status" value="1"/>
</dbReference>
<dbReference type="NCBIfam" id="TIGR00231">
    <property type="entry name" value="small_GTP"/>
    <property type="match status" value="1"/>
</dbReference>
<dbReference type="PANTHER" id="PTHR42714">
    <property type="entry name" value="TRNA MODIFICATION GTPASE GTPBP3"/>
    <property type="match status" value="1"/>
</dbReference>
<dbReference type="PANTHER" id="PTHR42714:SF2">
    <property type="entry name" value="TRNA MODIFICATION GTPASE GTPBP3, MITOCHONDRIAL"/>
    <property type="match status" value="1"/>
</dbReference>
<dbReference type="Pfam" id="PF01926">
    <property type="entry name" value="MMR_HSR1"/>
    <property type="match status" value="1"/>
</dbReference>
<dbReference type="Pfam" id="PF12631">
    <property type="entry name" value="MnmE_helical"/>
    <property type="match status" value="1"/>
</dbReference>
<dbReference type="Pfam" id="PF10396">
    <property type="entry name" value="TrmE_N"/>
    <property type="match status" value="1"/>
</dbReference>
<dbReference type="SUPFAM" id="SSF52540">
    <property type="entry name" value="P-loop containing nucleoside triphosphate hydrolases"/>
    <property type="match status" value="1"/>
</dbReference>
<dbReference type="SUPFAM" id="SSF116878">
    <property type="entry name" value="TrmE connector domain"/>
    <property type="match status" value="1"/>
</dbReference>
<dbReference type="PROSITE" id="PS51709">
    <property type="entry name" value="G_TRME"/>
    <property type="match status" value="1"/>
</dbReference>
<evidence type="ECO:0000255" key="1">
    <source>
        <dbReference type="HAMAP-Rule" id="MF_00379"/>
    </source>
</evidence>
<accession>Q6CYQ9</accession>
<reference key="1">
    <citation type="journal article" date="2004" name="Proc. Natl. Acad. Sci. U.S.A.">
        <title>Genome sequence of the enterobacterial phytopathogen Erwinia carotovora subsp. atroseptica and characterization of virulence factors.</title>
        <authorList>
            <person name="Bell K.S."/>
            <person name="Sebaihia M."/>
            <person name="Pritchard L."/>
            <person name="Holden M.T.G."/>
            <person name="Hyman L.J."/>
            <person name="Holeva M.C."/>
            <person name="Thomson N.R."/>
            <person name="Bentley S.D."/>
            <person name="Churcher L.J.C."/>
            <person name="Mungall K."/>
            <person name="Atkin R."/>
            <person name="Bason N."/>
            <person name="Brooks K."/>
            <person name="Chillingworth T."/>
            <person name="Clark K."/>
            <person name="Doggett J."/>
            <person name="Fraser A."/>
            <person name="Hance Z."/>
            <person name="Hauser H."/>
            <person name="Jagels K."/>
            <person name="Moule S."/>
            <person name="Norbertczak H."/>
            <person name="Ormond D."/>
            <person name="Price C."/>
            <person name="Quail M.A."/>
            <person name="Sanders M."/>
            <person name="Walker D."/>
            <person name="Whitehead S."/>
            <person name="Salmond G.P.C."/>
            <person name="Birch P.R.J."/>
            <person name="Parkhill J."/>
            <person name="Toth I.K."/>
        </authorList>
    </citation>
    <scope>NUCLEOTIDE SEQUENCE [LARGE SCALE GENOMIC DNA]</scope>
    <source>
        <strain>SCRI 1043 / ATCC BAA-672</strain>
    </source>
</reference>
<organism>
    <name type="scientific">Pectobacterium atrosepticum (strain SCRI 1043 / ATCC BAA-672)</name>
    <name type="common">Erwinia carotovora subsp. atroseptica</name>
    <dbReference type="NCBI Taxonomy" id="218491"/>
    <lineage>
        <taxon>Bacteria</taxon>
        <taxon>Pseudomonadati</taxon>
        <taxon>Pseudomonadota</taxon>
        <taxon>Gammaproteobacteria</taxon>
        <taxon>Enterobacterales</taxon>
        <taxon>Pectobacteriaceae</taxon>
        <taxon>Pectobacterium</taxon>
    </lineage>
</organism>
<keyword id="KW-0963">Cytoplasm</keyword>
<keyword id="KW-0342">GTP-binding</keyword>
<keyword id="KW-0378">Hydrolase</keyword>
<keyword id="KW-0460">Magnesium</keyword>
<keyword id="KW-0479">Metal-binding</keyword>
<keyword id="KW-0547">Nucleotide-binding</keyword>
<keyword id="KW-0630">Potassium</keyword>
<keyword id="KW-1185">Reference proteome</keyword>
<keyword id="KW-0819">tRNA processing</keyword>
<protein>
    <recommendedName>
        <fullName evidence="1">tRNA modification GTPase MnmE</fullName>
        <ecNumber evidence="1">3.6.-.-</ecNumber>
    </recommendedName>
</protein>
<comment type="function">
    <text evidence="1">Exhibits a very high intrinsic GTPase hydrolysis rate. Involved in the addition of a carboxymethylaminomethyl (cmnm) group at the wobble position (U34) of certain tRNAs, forming tRNA-cmnm(5)s(2)U34.</text>
</comment>
<comment type="cofactor">
    <cofactor evidence="1">
        <name>K(+)</name>
        <dbReference type="ChEBI" id="CHEBI:29103"/>
    </cofactor>
    <text evidence="1">Binds 1 potassium ion per subunit.</text>
</comment>
<comment type="subunit">
    <text evidence="1">Homodimer. Heterotetramer of two MnmE and two MnmG subunits.</text>
</comment>
<comment type="subcellular location">
    <subcellularLocation>
        <location evidence="1">Cytoplasm</location>
    </subcellularLocation>
</comment>
<comment type="similarity">
    <text evidence="1">Belongs to the TRAFAC class TrmE-Era-EngA-EngB-Septin-like GTPase superfamily. TrmE GTPase family.</text>
</comment>
<name>MNME_PECAS</name>
<feature type="chain" id="PRO_1000048827" description="tRNA modification GTPase MnmE">
    <location>
        <begin position="1"/>
        <end position="454"/>
    </location>
</feature>
<feature type="domain" description="TrmE-type G">
    <location>
        <begin position="216"/>
        <end position="377"/>
    </location>
</feature>
<feature type="binding site" evidence="1">
    <location>
        <position position="23"/>
    </location>
    <ligand>
        <name>(6S)-5-formyl-5,6,7,8-tetrahydrofolate</name>
        <dbReference type="ChEBI" id="CHEBI:57457"/>
    </ligand>
</feature>
<feature type="binding site" evidence="1">
    <location>
        <position position="80"/>
    </location>
    <ligand>
        <name>(6S)-5-formyl-5,6,7,8-tetrahydrofolate</name>
        <dbReference type="ChEBI" id="CHEBI:57457"/>
    </ligand>
</feature>
<feature type="binding site" evidence="1">
    <location>
        <position position="120"/>
    </location>
    <ligand>
        <name>(6S)-5-formyl-5,6,7,8-tetrahydrofolate</name>
        <dbReference type="ChEBI" id="CHEBI:57457"/>
    </ligand>
</feature>
<feature type="binding site" evidence="1">
    <location>
        <begin position="226"/>
        <end position="231"/>
    </location>
    <ligand>
        <name>GTP</name>
        <dbReference type="ChEBI" id="CHEBI:37565"/>
    </ligand>
</feature>
<feature type="binding site" evidence="1">
    <location>
        <position position="226"/>
    </location>
    <ligand>
        <name>K(+)</name>
        <dbReference type="ChEBI" id="CHEBI:29103"/>
    </ligand>
</feature>
<feature type="binding site" evidence="1">
    <location>
        <position position="230"/>
    </location>
    <ligand>
        <name>Mg(2+)</name>
        <dbReference type="ChEBI" id="CHEBI:18420"/>
    </ligand>
</feature>
<feature type="binding site" evidence="1">
    <location>
        <begin position="245"/>
        <end position="251"/>
    </location>
    <ligand>
        <name>GTP</name>
        <dbReference type="ChEBI" id="CHEBI:37565"/>
    </ligand>
</feature>
<feature type="binding site" evidence="1">
    <location>
        <position position="245"/>
    </location>
    <ligand>
        <name>K(+)</name>
        <dbReference type="ChEBI" id="CHEBI:29103"/>
    </ligand>
</feature>
<feature type="binding site" evidence="1">
    <location>
        <position position="247"/>
    </location>
    <ligand>
        <name>K(+)</name>
        <dbReference type="ChEBI" id="CHEBI:29103"/>
    </ligand>
</feature>
<feature type="binding site" evidence="1">
    <location>
        <position position="250"/>
    </location>
    <ligand>
        <name>K(+)</name>
        <dbReference type="ChEBI" id="CHEBI:29103"/>
    </ligand>
</feature>
<feature type="binding site" evidence="1">
    <location>
        <position position="251"/>
    </location>
    <ligand>
        <name>Mg(2+)</name>
        <dbReference type="ChEBI" id="CHEBI:18420"/>
    </ligand>
</feature>
<feature type="binding site" evidence="1">
    <location>
        <begin position="270"/>
        <end position="273"/>
    </location>
    <ligand>
        <name>GTP</name>
        <dbReference type="ChEBI" id="CHEBI:37565"/>
    </ligand>
</feature>
<feature type="binding site" evidence="1">
    <location>
        <begin position="335"/>
        <end position="338"/>
    </location>
    <ligand>
        <name>GTP</name>
        <dbReference type="ChEBI" id="CHEBI:37565"/>
    </ligand>
</feature>
<feature type="binding site" evidence="1">
    <location>
        <begin position="358"/>
        <end position="360"/>
    </location>
    <ligand>
        <name>GTP</name>
        <dbReference type="ChEBI" id="CHEBI:37565"/>
    </ligand>
</feature>
<feature type="binding site" evidence="1">
    <location>
        <position position="454"/>
    </location>
    <ligand>
        <name>(6S)-5-formyl-5,6,7,8-tetrahydrofolate</name>
        <dbReference type="ChEBI" id="CHEBI:57457"/>
    </ligand>
</feature>
<proteinExistence type="inferred from homology"/>